<evidence type="ECO:0000255" key="1">
    <source>
        <dbReference type="HAMAP-Rule" id="MF_01345"/>
    </source>
</evidence>
<evidence type="ECO:0000269" key="2">
    <source>
    </source>
</evidence>
<evidence type="ECO:0000305" key="3"/>
<protein>
    <recommendedName>
        <fullName evidence="1">Small ribosomal subunit protein uS17</fullName>
    </recommendedName>
    <alternativeName>
        <fullName evidence="3">30S ribosomal protein S17</fullName>
    </alternativeName>
    <alternativeName>
        <fullName>RRP-S17</fullName>
    </alternativeName>
</protein>
<feature type="initiator methionine" description="Removed">
    <location>
        <position position="1"/>
    </location>
</feature>
<feature type="chain" id="PRO_0000224167" description="Small ribosomal subunit protein uS17">
    <location>
        <begin position="2"/>
        <end position="82"/>
    </location>
</feature>
<proteinExistence type="evidence at protein level"/>
<sequence length="82" mass="9685">MPKRTLQGVVVSDKQAKTIVVRVDRRFTHPIYKKTIRRSKNYHAHDENNQFKPGDMVWIEESKPISKLKRWTVVRGEPKKTA</sequence>
<accession>Q6N4U3</accession>
<gene>
    <name evidence="1" type="primary">rpsQ</name>
    <name type="ordered locus">RPA3241</name>
</gene>
<name>RS17_RHOPA</name>
<keyword id="KW-0687">Ribonucleoprotein</keyword>
<keyword id="KW-0689">Ribosomal protein</keyword>
<keyword id="KW-0694">RNA-binding</keyword>
<keyword id="KW-0699">rRNA-binding</keyword>
<reference key="1">
    <citation type="journal article" date="2004" name="Nat. Biotechnol.">
        <title>Complete genome sequence of the metabolically versatile photosynthetic bacterium Rhodopseudomonas palustris.</title>
        <authorList>
            <person name="Larimer F.W."/>
            <person name="Chain P."/>
            <person name="Hauser L."/>
            <person name="Lamerdin J.E."/>
            <person name="Malfatti S."/>
            <person name="Do L."/>
            <person name="Land M.L."/>
            <person name="Pelletier D.A."/>
            <person name="Beatty J.T."/>
            <person name="Lang A.S."/>
            <person name="Tabita F.R."/>
            <person name="Gibson J.L."/>
            <person name="Hanson T.E."/>
            <person name="Bobst C."/>
            <person name="Torres y Torres J.L."/>
            <person name="Peres C."/>
            <person name="Harrison F.H."/>
            <person name="Gibson J."/>
            <person name="Harwood C.S."/>
        </authorList>
    </citation>
    <scope>NUCLEOTIDE SEQUENCE [LARGE SCALE GENOMIC DNA]</scope>
    <source>
        <strain>ATCC BAA-98 / CGA009</strain>
    </source>
</reference>
<reference key="2">
    <citation type="journal article" date="2004" name="J. Proteome Res.">
        <title>Characterization of the 70S ribosome from Rhodopseudomonas palustris using an integrated 'top-down' and 'bottom-up' mass spectrometric approach.</title>
        <authorList>
            <person name="Strader M.B."/>
            <person name="VerBerkmoes N.C."/>
            <person name="Tabb D.L."/>
            <person name="Connelly H.M."/>
            <person name="Barton J.W."/>
            <person name="Bruce B.D."/>
            <person name="Pelletier D.A."/>
            <person name="Davison B.H."/>
            <person name="Hettich R.L."/>
            <person name="Larimer F.W."/>
            <person name="Hurst G.B."/>
        </authorList>
    </citation>
    <scope>MASS SPECTROMETRY</scope>
    <source>
        <strain>ATCC BAA-98 / CGA009</strain>
    </source>
</reference>
<organism>
    <name type="scientific">Rhodopseudomonas palustris (strain ATCC BAA-98 / CGA009)</name>
    <dbReference type="NCBI Taxonomy" id="258594"/>
    <lineage>
        <taxon>Bacteria</taxon>
        <taxon>Pseudomonadati</taxon>
        <taxon>Pseudomonadota</taxon>
        <taxon>Alphaproteobacteria</taxon>
        <taxon>Hyphomicrobiales</taxon>
        <taxon>Nitrobacteraceae</taxon>
        <taxon>Rhodopseudomonas</taxon>
    </lineage>
</organism>
<dbReference type="EMBL" id="BX572603">
    <property type="protein sequence ID" value="CAE28682.1"/>
    <property type="molecule type" value="Genomic_DNA"/>
</dbReference>
<dbReference type="RefSeq" id="WP_011158786.1">
    <property type="nucleotide sequence ID" value="NZ_CP116810.1"/>
</dbReference>
<dbReference type="SMR" id="Q6N4U3"/>
<dbReference type="IntAct" id="Q6N4U3">
    <property type="interactions" value="1"/>
</dbReference>
<dbReference type="STRING" id="258594.RPA3241"/>
<dbReference type="GeneID" id="66894327"/>
<dbReference type="eggNOG" id="COG0186">
    <property type="taxonomic scope" value="Bacteria"/>
</dbReference>
<dbReference type="HOGENOM" id="CLU_073626_1_1_5"/>
<dbReference type="PhylomeDB" id="Q6N4U3"/>
<dbReference type="GO" id="GO:0022627">
    <property type="term" value="C:cytosolic small ribosomal subunit"/>
    <property type="evidence" value="ECO:0007669"/>
    <property type="project" value="TreeGrafter"/>
</dbReference>
<dbReference type="GO" id="GO:0019843">
    <property type="term" value="F:rRNA binding"/>
    <property type="evidence" value="ECO:0007669"/>
    <property type="project" value="UniProtKB-UniRule"/>
</dbReference>
<dbReference type="GO" id="GO:0003735">
    <property type="term" value="F:structural constituent of ribosome"/>
    <property type="evidence" value="ECO:0007669"/>
    <property type="project" value="InterPro"/>
</dbReference>
<dbReference type="GO" id="GO:0006412">
    <property type="term" value="P:translation"/>
    <property type="evidence" value="ECO:0007669"/>
    <property type="project" value="UniProtKB-UniRule"/>
</dbReference>
<dbReference type="CDD" id="cd00364">
    <property type="entry name" value="Ribosomal_uS17"/>
    <property type="match status" value="1"/>
</dbReference>
<dbReference type="FunFam" id="2.40.50.140:FF:000204">
    <property type="entry name" value="30S ribosomal protein S17"/>
    <property type="match status" value="1"/>
</dbReference>
<dbReference type="Gene3D" id="2.40.50.140">
    <property type="entry name" value="Nucleic acid-binding proteins"/>
    <property type="match status" value="1"/>
</dbReference>
<dbReference type="HAMAP" id="MF_01345_B">
    <property type="entry name" value="Ribosomal_uS17_B"/>
    <property type="match status" value="1"/>
</dbReference>
<dbReference type="InterPro" id="IPR012340">
    <property type="entry name" value="NA-bd_OB-fold"/>
</dbReference>
<dbReference type="InterPro" id="IPR000266">
    <property type="entry name" value="Ribosomal_uS17"/>
</dbReference>
<dbReference type="InterPro" id="IPR019984">
    <property type="entry name" value="Ribosomal_uS17_bact/chlr"/>
</dbReference>
<dbReference type="InterPro" id="IPR019979">
    <property type="entry name" value="Ribosomal_uS17_CS"/>
</dbReference>
<dbReference type="NCBIfam" id="NF004123">
    <property type="entry name" value="PRK05610.1"/>
    <property type="match status" value="1"/>
</dbReference>
<dbReference type="NCBIfam" id="TIGR03635">
    <property type="entry name" value="uS17_bact"/>
    <property type="match status" value="1"/>
</dbReference>
<dbReference type="PANTHER" id="PTHR10744">
    <property type="entry name" value="40S RIBOSOMAL PROTEIN S11 FAMILY MEMBER"/>
    <property type="match status" value="1"/>
</dbReference>
<dbReference type="PANTHER" id="PTHR10744:SF1">
    <property type="entry name" value="SMALL RIBOSOMAL SUBUNIT PROTEIN US17M"/>
    <property type="match status" value="1"/>
</dbReference>
<dbReference type="Pfam" id="PF00366">
    <property type="entry name" value="Ribosomal_S17"/>
    <property type="match status" value="1"/>
</dbReference>
<dbReference type="PRINTS" id="PR00973">
    <property type="entry name" value="RIBOSOMALS17"/>
</dbReference>
<dbReference type="SUPFAM" id="SSF50249">
    <property type="entry name" value="Nucleic acid-binding proteins"/>
    <property type="match status" value="1"/>
</dbReference>
<dbReference type="PROSITE" id="PS00056">
    <property type="entry name" value="RIBOSOMAL_S17"/>
    <property type="match status" value="1"/>
</dbReference>
<comment type="function">
    <text evidence="1">One of the primary rRNA binding proteins, it binds specifically to the 5'-end of 16S ribosomal RNA.</text>
</comment>
<comment type="subunit">
    <text evidence="1">Part of the 30S ribosomal subunit.</text>
</comment>
<comment type="mass spectrometry" mass="9553.3" method="Electrospray" evidence="2"/>
<comment type="similarity">
    <text evidence="1">Belongs to the universal ribosomal protein uS17 family.</text>
</comment>